<dbReference type="EMBL" id="CY009301">
    <property type="protein sequence ID" value="ABD61553.1"/>
    <property type="molecule type" value="Genomic_RNA"/>
</dbReference>
<dbReference type="SMR" id="Q288Z5"/>
<dbReference type="GlyCosmos" id="Q288Z5">
    <property type="glycosylation" value="1 site, No reported glycans"/>
</dbReference>
<dbReference type="Proteomes" id="UP000009193">
    <property type="component" value="Genome"/>
</dbReference>
<dbReference type="GO" id="GO:0020002">
    <property type="term" value="C:host cell plasma membrane"/>
    <property type="evidence" value="ECO:0007669"/>
    <property type="project" value="UniProtKB-SubCell"/>
</dbReference>
<dbReference type="GO" id="GO:0016020">
    <property type="term" value="C:membrane"/>
    <property type="evidence" value="ECO:0007669"/>
    <property type="project" value="UniProtKB-UniRule"/>
</dbReference>
<dbReference type="GO" id="GO:0055036">
    <property type="term" value="C:virion membrane"/>
    <property type="evidence" value="ECO:0007669"/>
    <property type="project" value="UniProtKB-SubCell"/>
</dbReference>
<dbReference type="GO" id="GO:0005216">
    <property type="term" value="F:monoatomic ion channel activity"/>
    <property type="evidence" value="ECO:0007669"/>
    <property type="project" value="UniProtKB-UniRule"/>
</dbReference>
<dbReference type="GO" id="GO:0015078">
    <property type="term" value="F:proton transmembrane transporter activity"/>
    <property type="evidence" value="ECO:0007669"/>
    <property type="project" value="UniProtKB-UniRule"/>
</dbReference>
<dbReference type="GO" id="GO:0051259">
    <property type="term" value="P:protein complex oligomerization"/>
    <property type="evidence" value="ECO:0007669"/>
    <property type="project" value="UniProtKB-UniRule"/>
</dbReference>
<dbReference type="GO" id="GO:0044694">
    <property type="term" value="P:symbiont genome entry into host cell via pore formation in plasma membrane"/>
    <property type="evidence" value="ECO:0007669"/>
    <property type="project" value="UniProtKB-UniRule"/>
</dbReference>
<dbReference type="GO" id="GO:0140321">
    <property type="term" value="P:symbiont-mediated suppression of host autophagy"/>
    <property type="evidence" value="ECO:0007669"/>
    <property type="project" value="UniProtKB-KW"/>
</dbReference>
<dbReference type="Gene3D" id="6.10.250.1640">
    <property type="match status" value="1"/>
</dbReference>
<dbReference type="HAMAP" id="MF_04069">
    <property type="entry name" value="INFV_M2"/>
    <property type="match status" value="1"/>
</dbReference>
<dbReference type="InterPro" id="IPR002089">
    <property type="entry name" value="Flu_M2"/>
</dbReference>
<dbReference type="Pfam" id="PF00599">
    <property type="entry name" value="Flu_M2"/>
    <property type="match status" value="1"/>
</dbReference>
<organismHost>
    <name type="scientific">Aves</name>
    <dbReference type="NCBI Taxonomy" id="8782"/>
</organismHost>
<organismHost>
    <name type="scientific">Cetacea</name>
    <name type="common">whales</name>
    <dbReference type="NCBI Taxonomy" id="9721"/>
</organismHost>
<organismHost>
    <name type="scientific">Homo sapiens</name>
    <name type="common">Human</name>
    <dbReference type="NCBI Taxonomy" id="9606"/>
</organismHost>
<organismHost>
    <name type="scientific">Phocidae</name>
    <name type="common">true seals</name>
    <dbReference type="NCBI Taxonomy" id="9709"/>
</organismHost>
<organismHost>
    <name type="scientific">Sus scrofa</name>
    <name type="common">Pig</name>
    <dbReference type="NCBI Taxonomy" id="9823"/>
</organismHost>
<evidence type="ECO:0000255" key="1">
    <source>
        <dbReference type="HAMAP-Rule" id="MF_04069"/>
    </source>
</evidence>
<evidence type="ECO:0000256" key="2">
    <source>
        <dbReference type="SAM" id="MobiDB-lite"/>
    </source>
</evidence>
<name>M2_I77A4</name>
<sequence length="96" mass="11003">MSLLTEVETPIRSEWGCRCNDSSDPFVVAASIIGILHLILWILDRLFFKCIYRSFEHGLKRGPSTEGVPESMREEYRQEQQSAVDADDSHFVSIEL</sequence>
<protein>
    <recommendedName>
        <fullName evidence="1">Matrix protein 2</fullName>
    </recommendedName>
    <alternativeName>
        <fullName evidence="1">Proton channel protein M2</fullName>
    </alternativeName>
</protein>
<feature type="chain" id="PRO_0000326357" description="Matrix protein 2">
    <location>
        <begin position="1"/>
        <end position="96"/>
    </location>
</feature>
<feature type="topological domain" description="Virion surface" evidence="1">
    <location>
        <begin position="1"/>
        <end position="22"/>
    </location>
</feature>
<feature type="transmembrane region" description="Helical; Signal-anchor for type III membrane protein" evidence="1">
    <location>
        <begin position="23"/>
        <end position="43"/>
    </location>
</feature>
<feature type="topological domain" description="Intravirion" evidence="1">
    <location>
        <begin position="44"/>
        <end position="96"/>
    </location>
</feature>
<feature type="region of interest" description="Disordered" evidence="2">
    <location>
        <begin position="59"/>
        <end position="88"/>
    </location>
</feature>
<feature type="site" description="Essential for channel activity, possibly by being protonated during channel activation, and by forming the channel gate and the selective filter" evidence="1">
    <location>
        <position position="37"/>
    </location>
</feature>
<feature type="site" description="Seems to be involved in pH gating" evidence="1">
    <location>
        <position position="41"/>
    </location>
</feature>
<feature type="modified residue" description="Phosphoserine; by host" evidence="1">
    <location>
        <position position="64"/>
    </location>
</feature>
<feature type="modified residue" description="Phosphoserine; by host" evidence="1">
    <location>
        <position position="82"/>
    </location>
</feature>
<feature type="modified residue" description="Phosphoserine; by host" evidence="1">
    <location>
        <position position="93"/>
    </location>
</feature>
<feature type="lipid moiety-binding region" description="S-palmitoyl cysteine; by host" evidence="1">
    <location>
        <position position="50"/>
    </location>
</feature>
<feature type="glycosylation site" description="N-linked (GlcNAc...) asparagine; by host" evidence="1">
    <location>
        <position position="20"/>
    </location>
</feature>
<feature type="disulfide bond" description="Interchain (with C-17)" evidence="1">
    <location>
        <position position="17"/>
    </location>
</feature>
<feature type="disulfide bond" description="Interchain (with C-19)" evidence="1">
    <location>
        <position position="19"/>
    </location>
</feature>
<accession>Q288Z5</accession>
<keyword id="KW-0025">Alternative splicing</keyword>
<keyword id="KW-1015">Disulfide bond</keyword>
<keyword id="KW-0325">Glycoprotein</keyword>
<keyword id="KW-1032">Host cell membrane</keyword>
<keyword id="KW-1043">Host membrane</keyword>
<keyword id="KW-0945">Host-virus interaction</keyword>
<keyword id="KW-0375">Hydrogen ion transport</keyword>
<keyword id="KW-1083">Inhibition of host autophagy by virus</keyword>
<keyword id="KW-0407">Ion channel</keyword>
<keyword id="KW-0406">Ion transport</keyword>
<keyword id="KW-0449">Lipoprotein</keyword>
<keyword id="KW-0472">Membrane</keyword>
<keyword id="KW-0564">Palmitate</keyword>
<keyword id="KW-0597">Phosphoprotein</keyword>
<keyword id="KW-0735">Signal-anchor</keyword>
<keyword id="KW-0812">Transmembrane</keyword>
<keyword id="KW-1133">Transmembrane helix</keyword>
<keyword id="KW-0813">Transport</keyword>
<keyword id="KW-1182">Viral ion channel</keyword>
<keyword id="KW-0946">Virion</keyword>
<proteinExistence type="inferred from homology"/>
<organism>
    <name type="scientific">Influenza A virus (strain A/Swine/Colorado/1/1977 H3N2)</name>
    <dbReference type="NCBI Taxonomy" id="385645"/>
    <lineage>
        <taxon>Viruses</taxon>
        <taxon>Riboviria</taxon>
        <taxon>Orthornavirae</taxon>
        <taxon>Negarnaviricota</taxon>
        <taxon>Polyploviricotina</taxon>
        <taxon>Insthoviricetes</taxon>
        <taxon>Articulavirales</taxon>
        <taxon>Orthomyxoviridae</taxon>
        <taxon>Alphainfluenzavirus</taxon>
        <taxon>Alphainfluenzavirus influenzae</taxon>
        <taxon>Influenza A virus</taxon>
    </lineage>
</organism>
<comment type="function">
    <text evidence="1">Forms a proton-selective ion channel that is necessary for the efficient release of the viral genome during virus entry. After attaching to the cell surface, the virion enters the cell by endocytosis. Acidification of the endosome triggers M2 ion channel activity. The influx of protons into virion interior is believed to disrupt interactions between the viral ribonucleoprotein (RNP), matrix protein 1 (M1), and lipid bilayers, thereby freeing the viral genome from interaction with viral proteins and enabling RNA segments to migrate to the host cell nucleus, where influenza virus RNA transcription and replication occur. Also plays a role in viral proteins secretory pathway. Elevates the intravesicular pH of normally acidic compartments, such as trans-Golgi network, preventing newly formed hemagglutinin from premature switching to the fusion-active conformation.</text>
</comment>
<comment type="activity regulation">
    <text>The M2 protein from most influenza A strains is inhibited by amantadine and rimantadine, resulting in viral uncoating incapacity. Emergence of amantadine-resistant variants is usually rapid.</text>
</comment>
<comment type="subunit">
    <text evidence="1">Homotetramer; composed of two disulfide-linked dimers held together by non-covalent interactions. May interact with matrix protein 1.</text>
</comment>
<comment type="subcellular location">
    <subcellularLocation>
        <location evidence="1">Virion membrane</location>
    </subcellularLocation>
    <subcellularLocation>
        <location evidence="1">Host apical cell membrane</location>
        <topology evidence="1">Single-pass type III membrane protein</topology>
    </subcellularLocation>
    <text evidence="1">Abundantly expressed at the apical plasma membrane in infected polarized epithelial cells, in close proximity to budding and assembled virions. Minor component of virions (only 16-20 molecules/virion).</text>
</comment>
<comment type="alternative products">
    <event type="alternative splicing"/>
    <isoform>
        <id>Q288Z5-1</id>
        <name>M2</name>
        <sequence type="displayed"/>
    </isoform>
    <isoform>
        <id>Q9EA40-1</id>
        <name>M1</name>
        <sequence type="external"/>
    </isoform>
    <text>Only the first 9 residues are shared by the 2 isoforms.</text>
</comment>
<comment type="domain">
    <text evidence="1">Cytoplasmic tail plays an important role in virion assembly and morphogenesis.</text>
</comment>
<comment type="miscellaneous">
    <text evidence="1">When the channel is activated, one or more imidazole moieties of His-37 probably become bi-protonated.</text>
</comment>
<comment type="similarity">
    <text evidence="1">Belongs to the influenza viruses matrix protein M2 family.</text>
</comment>
<gene>
    <name evidence="1" type="primary">M</name>
</gene>
<reference key="1">
    <citation type="submission" date="2006-03" db="EMBL/GenBank/DDBJ databases">
        <title>The NIAID influenza genome sequencing project.</title>
        <authorList>
            <person name="Ghedin E."/>
            <person name="Spiro D."/>
            <person name="Miller N."/>
            <person name="Zaborsky J."/>
            <person name="Feldblyum T."/>
            <person name="Subbu V."/>
            <person name="Shumway M."/>
            <person name="Sparenborg J."/>
            <person name="Groveman L."/>
            <person name="Halpin R."/>
            <person name="Sitz J."/>
            <person name="Koo H."/>
            <person name="Salzberg S.L."/>
            <person name="Webster R.G."/>
            <person name="Hoffmann E."/>
            <person name="Krauss S."/>
            <person name="Naeve C."/>
            <person name="Bao Y."/>
            <person name="Bolotov P."/>
            <person name="Dernovoy D."/>
            <person name="Kiryutin B."/>
            <person name="Lipman D.J."/>
            <person name="Tatusova T."/>
        </authorList>
    </citation>
    <scope>NUCLEOTIDE SEQUENCE [GENOMIC RNA]</scope>
</reference>